<reference key="1">
    <citation type="journal article" date="2004" name="Am. J. Physiol.">
        <title>Cloning and characterization of mouse 5'-AMP-activated protein kinase gamma3 subunit.</title>
        <authorList>
            <person name="Yu H."/>
            <person name="Fujii N."/>
            <person name="Hirshman M.F."/>
            <person name="Pomerleau J.M."/>
            <person name="Goodyear L.J."/>
        </authorList>
    </citation>
    <scope>NUCLEOTIDE SEQUENCE [MRNA] (ISOFORMS 1 AND 2)</scope>
    <source>
        <strain>BALB/cJ</strain>
        <tissue>Skeletal muscle</tissue>
    </source>
</reference>
<reference key="2">
    <citation type="journal article" date="2003" name="Cytogenet. Genome Res.">
        <title>Comparative sequence analysis of the PRKAG3 region between human and pig: evolution of repetitive sequences and potential new exons.</title>
        <authorList>
            <person name="Amarger V."/>
            <person name="Erlandsson R."/>
            <person name="Pielberg G."/>
            <person name="Jeon J.-T."/>
            <person name="Andersson L."/>
        </authorList>
    </citation>
    <scope>NUCLEOTIDE SEQUENCE [GENOMIC DNA]</scope>
</reference>
<reference key="3">
    <citation type="journal article" date="2005" name="Science">
        <title>The transcriptional landscape of the mammalian genome.</title>
        <authorList>
            <person name="Carninci P."/>
            <person name="Kasukawa T."/>
            <person name="Katayama S."/>
            <person name="Gough J."/>
            <person name="Frith M.C."/>
            <person name="Maeda N."/>
            <person name="Oyama R."/>
            <person name="Ravasi T."/>
            <person name="Lenhard B."/>
            <person name="Wells C."/>
            <person name="Kodzius R."/>
            <person name="Shimokawa K."/>
            <person name="Bajic V.B."/>
            <person name="Brenner S.E."/>
            <person name="Batalov S."/>
            <person name="Forrest A.R."/>
            <person name="Zavolan M."/>
            <person name="Davis M.J."/>
            <person name="Wilming L.G."/>
            <person name="Aidinis V."/>
            <person name="Allen J.E."/>
            <person name="Ambesi-Impiombato A."/>
            <person name="Apweiler R."/>
            <person name="Aturaliya R.N."/>
            <person name="Bailey T.L."/>
            <person name="Bansal M."/>
            <person name="Baxter L."/>
            <person name="Beisel K.W."/>
            <person name="Bersano T."/>
            <person name="Bono H."/>
            <person name="Chalk A.M."/>
            <person name="Chiu K.P."/>
            <person name="Choudhary V."/>
            <person name="Christoffels A."/>
            <person name="Clutterbuck D.R."/>
            <person name="Crowe M.L."/>
            <person name="Dalla E."/>
            <person name="Dalrymple B.P."/>
            <person name="de Bono B."/>
            <person name="Della Gatta G."/>
            <person name="di Bernardo D."/>
            <person name="Down T."/>
            <person name="Engstrom P."/>
            <person name="Fagiolini M."/>
            <person name="Faulkner G."/>
            <person name="Fletcher C.F."/>
            <person name="Fukushima T."/>
            <person name="Furuno M."/>
            <person name="Futaki S."/>
            <person name="Gariboldi M."/>
            <person name="Georgii-Hemming P."/>
            <person name="Gingeras T.R."/>
            <person name="Gojobori T."/>
            <person name="Green R.E."/>
            <person name="Gustincich S."/>
            <person name="Harbers M."/>
            <person name="Hayashi Y."/>
            <person name="Hensch T.K."/>
            <person name="Hirokawa N."/>
            <person name="Hill D."/>
            <person name="Huminiecki L."/>
            <person name="Iacono M."/>
            <person name="Ikeo K."/>
            <person name="Iwama A."/>
            <person name="Ishikawa T."/>
            <person name="Jakt M."/>
            <person name="Kanapin A."/>
            <person name="Katoh M."/>
            <person name="Kawasawa Y."/>
            <person name="Kelso J."/>
            <person name="Kitamura H."/>
            <person name="Kitano H."/>
            <person name="Kollias G."/>
            <person name="Krishnan S.P."/>
            <person name="Kruger A."/>
            <person name="Kummerfeld S.K."/>
            <person name="Kurochkin I.V."/>
            <person name="Lareau L.F."/>
            <person name="Lazarevic D."/>
            <person name="Lipovich L."/>
            <person name="Liu J."/>
            <person name="Liuni S."/>
            <person name="McWilliam S."/>
            <person name="Madan Babu M."/>
            <person name="Madera M."/>
            <person name="Marchionni L."/>
            <person name="Matsuda H."/>
            <person name="Matsuzawa S."/>
            <person name="Miki H."/>
            <person name="Mignone F."/>
            <person name="Miyake S."/>
            <person name="Morris K."/>
            <person name="Mottagui-Tabar S."/>
            <person name="Mulder N."/>
            <person name="Nakano N."/>
            <person name="Nakauchi H."/>
            <person name="Ng P."/>
            <person name="Nilsson R."/>
            <person name="Nishiguchi S."/>
            <person name="Nishikawa S."/>
            <person name="Nori F."/>
            <person name="Ohara O."/>
            <person name="Okazaki Y."/>
            <person name="Orlando V."/>
            <person name="Pang K.C."/>
            <person name="Pavan W.J."/>
            <person name="Pavesi G."/>
            <person name="Pesole G."/>
            <person name="Petrovsky N."/>
            <person name="Piazza S."/>
            <person name="Reed J."/>
            <person name="Reid J.F."/>
            <person name="Ring B.Z."/>
            <person name="Ringwald M."/>
            <person name="Rost B."/>
            <person name="Ruan Y."/>
            <person name="Salzberg S.L."/>
            <person name="Sandelin A."/>
            <person name="Schneider C."/>
            <person name="Schoenbach C."/>
            <person name="Sekiguchi K."/>
            <person name="Semple C.A."/>
            <person name="Seno S."/>
            <person name="Sessa L."/>
            <person name="Sheng Y."/>
            <person name="Shibata Y."/>
            <person name="Shimada H."/>
            <person name="Shimada K."/>
            <person name="Silva D."/>
            <person name="Sinclair B."/>
            <person name="Sperling S."/>
            <person name="Stupka E."/>
            <person name="Sugiura K."/>
            <person name="Sultana R."/>
            <person name="Takenaka Y."/>
            <person name="Taki K."/>
            <person name="Tammoja K."/>
            <person name="Tan S.L."/>
            <person name="Tang S."/>
            <person name="Taylor M.S."/>
            <person name="Tegner J."/>
            <person name="Teichmann S.A."/>
            <person name="Ueda H.R."/>
            <person name="van Nimwegen E."/>
            <person name="Verardo R."/>
            <person name="Wei C.L."/>
            <person name="Yagi K."/>
            <person name="Yamanishi H."/>
            <person name="Zabarovsky E."/>
            <person name="Zhu S."/>
            <person name="Zimmer A."/>
            <person name="Hide W."/>
            <person name="Bult C."/>
            <person name="Grimmond S.M."/>
            <person name="Teasdale R.D."/>
            <person name="Liu E.T."/>
            <person name="Brusic V."/>
            <person name="Quackenbush J."/>
            <person name="Wahlestedt C."/>
            <person name="Mattick J.S."/>
            <person name="Hume D.A."/>
            <person name="Kai C."/>
            <person name="Sasaki D."/>
            <person name="Tomaru Y."/>
            <person name="Fukuda S."/>
            <person name="Kanamori-Katayama M."/>
            <person name="Suzuki M."/>
            <person name="Aoki J."/>
            <person name="Arakawa T."/>
            <person name="Iida J."/>
            <person name="Imamura K."/>
            <person name="Itoh M."/>
            <person name="Kato T."/>
            <person name="Kawaji H."/>
            <person name="Kawagashira N."/>
            <person name="Kawashima T."/>
            <person name="Kojima M."/>
            <person name="Kondo S."/>
            <person name="Konno H."/>
            <person name="Nakano K."/>
            <person name="Ninomiya N."/>
            <person name="Nishio T."/>
            <person name="Okada M."/>
            <person name="Plessy C."/>
            <person name="Shibata K."/>
            <person name="Shiraki T."/>
            <person name="Suzuki S."/>
            <person name="Tagami M."/>
            <person name="Waki K."/>
            <person name="Watahiki A."/>
            <person name="Okamura-Oho Y."/>
            <person name="Suzuki H."/>
            <person name="Kawai J."/>
            <person name="Hayashizaki Y."/>
        </authorList>
    </citation>
    <scope>NUCLEOTIDE SEQUENCE [LARGE SCALE MRNA] (ISOFORM 1)</scope>
    <source>
        <strain>C57BL/6J</strain>
        <tissue>Bone</tissue>
    </source>
</reference>
<reference key="4">
    <citation type="journal article" date="2004" name="Genome Res.">
        <title>The status, quality, and expansion of the NIH full-length cDNA project: the Mammalian Gene Collection (MGC).</title>
        <authorList>
            <consortium name="The MGC Project Team"/>
        </authorList>
    </citation>
    <scope>NUCLEOTIDE SEQUENCE [LARGE SCALE MRNA] (ISOFORM 2)</scope>
    <source>
        <tissue>Brain</tissue>
    </source>
</reference>
<reference key="5">
    <citation type="journal article" date="2011" name="Autophagy">
        <title>Ulk1-mediated phosphorylation of AMPK constitutes a negative regulatory feedback loop.</title>
        <authorList>
            <person name="Loffler A.S."/>
            <person name="Alers S."/>
            <person name="Dieterle A.M."/>
            <person name="Keppeler H."/>
            <person name="Franz-Wachtel M."/>
            <person name="Kundu M."/>
            <person name="Campbell D.G."/>
            <person name="Wesselborg S."/>
            <person name="Alessi D.R."/>
            <person name="Stork B."/>
        </authorList>
    </citation>
    <scope>PHOSPHORYLATION BY ULK1</scope>
</reference>
<keyword id="KW-0025">Alternative splicing</keyword>
<keyword id="KW-0067">ATP-binding</keyword>
<keyword id="KW-0129">CBS domain</keyword>
<keyword id="KW-0275">Fatty acid biosynthesis</keyword>
<keyword id="KW-0276">Fatty acid metabolism</keyword>
<keyword id="KW-0325">Glycoprotein</keyword>
<keyword id="KW-0444">Lipid biosynthesis</keyword>
<keyword id="KW-0443">Lipid metabolism</keyword>
<keyword id="KW-0547">Nucleotide-binding</keyword>
<keyword id="KW-0597">Phosphoprotein</keyword>
<keyword id="KW-1185">Reference proteome</keyword>
<keyword id="KW-0677">Repeat</keyword>
<evidence type="ECO:0000250" key="1"/>
<evidence type="ECO:0000250" key="2">
    <source>
        <dbReference type="UniProtKB" id="P80385"/>
    </source>
</evidence>
<evidence type="ECO:0000250" key="3">
    <source>
        <dbReference type="UniProtKB" id="Q9UGI9"/>
    </source>
</evidence>
<evidence type="ECO:0000255" key="4">
    <source>
        <dbReference type="PROSITE-ProRule" id="PRU00703"/>
    </source>
</evidence>
<evidence type="ECO:0000256" key="5">
    <source>
        <dbReference type="SAM" id="MobiDB-lite"/>
    </source>
</evidence>
<evidence type="ECO:0000269" key="6">
    <source>
    </source>
</evidence>
<evidence type="ECO:0000303" key="7">
    <source>
    </source>
</evidence>
<evidence type="ECO:0000303" key="8">
    <source>
    </source>
</evidence>
<evidence type="ECO:0000305" key="9"/>
<dbReference type="EMBL" id="AF525500">
    <property type="protein sequence ID" value="AAN47137.1"/>
    <property type="molecule type" value="mRNA"/>
</dbReference>
<dbReference type="EMBL" id="AF525501">
    <property type="protein sequence ID" value="AAN47138.1"/>
    <property type="molecule type" value="mRNA"/>
</dbReference>
<dbReference type="EMBL" id="AY263402">
    <property type="protein sequence ID" value="AAP22981.1"/>
    <property type="molecule type" value="Genomic_DNA"/>
</dbReference>
<dbReference type="EMBL" id="AK036585">
    <property type="protein sequence ID" value="BAC29492.1"/>
    <property type="molecule type" value="mRNA"/>
</dbReference>
<dbReference type="EMBL" id="BC116749">
    <property type="protein sequence ID" value="AAI16750.1"/>
    <property type="molecule type" value="mRNA"/>
</dbReference>
<dbReference type="EMBL" id="BC116777">
    <property type="protein sequence ID" value="AAI16778.1"/>
    <property type="molecule type" value="mRNA"/>
</dbReference>
<dbReference type="CCDS" id="CCDS15055.1">
    <molecule id="Q8BGM7-1"/>
</dbReference>
<dbReference type="RefSeq" id="NP_714966.1">
    <molecule id="Q8BGM7-1"/>
    <property type="nucleotide sequence ID" value="NM_153744.4"/>
</dbReference>
<dbReference type="RefSeq" id="XP_006496051.1">
    <molecule id="Q8BGM7-1"/>
    <property type="nucleotide sequence ID" value="XM_006495988.5"/>
</dbReference>
<dbReference type="RefSeq" id="XP_006496052.1">
    <molecule id="Q8BGM7-1"/>
    <property type="nucleotide sequence ID" value="XM_006495989.5"/>
</dbReference>
<dbReference type="SMR" id="Q8BGM7"/>
<dbReference type="ComplexPortal" id="CPX-5854">
    <property type="entry name" value="AMPK complex, alpha2-beta2-gamma3 variant"/>
</dbReference>
<dbReference type="ComplexPortal" id="CPX-5855">
    <property type="entry name" value="AMPK complex, alpha1-beta2-gamma3 variant"/>
</dbReference>
<dbReference type="ComplexPortal" id="CPX-5856">
    <property type="entry name" value="AMPK complex, alpha1-beta1-gamma3 variant"/>
</dbReference>
<dbReference type="ComplexPortal" id="CPX-5857">
    <property type="entry name" value="AMPK complex, alpha2-beta1-gamma3 variant"/>
</dbReference>
<dbReference type="FunCoup" id="Q8BGM7">
    <property type="interactions" value="639"/>
</dbReference>
<dbReference type="STRING" id="10090.ENSMUSP00000139909"/>
<dbReference type="BindingDB" id="Q8BGM7"/>
<dbReference type="ChEMBL" id="CHEMBL4524004"/>
<dbReference type="iPTMnet" id="Q8BGM7"/>
<dbReference type="PhosphoSitePlus" id="Q8BGM7"/>
<dbReference type="PaxDb" id="10090-ENSMUSP00000139909"/>
<dbReference type="ProteomicsDB" id="286014">
    <molecule id="Q8BGM7-1"/>
</dbReference>
<dbReference type="ProteomicsDB" id="286015">
    <molecule id="Q8BGM7-2"/>
</dbReference>
<dbReference type="Antibodypedia" id="1331">
    <property type="antibodies" value="255 antibodies from 25 providers"/>
</dbReference>
<dbReference type="DNASU" id="241113"/>
<dbReference type="Ensembl" id="ENSMUST00000081636.13">
    <molecule id="Q8BGM7-1"/>
    <property type="protein sequence ID" value="ENSMUSP00000080342.7"/>
    <property type="gene ID" value="ENSMUSG00000006542.14"/>
</dbReference>
<dbReference type="Ensembl" id="ENSMUST00000113672.9">
    <molecule id="Q8BGM7-2"/>
    <property type="protein sequence ID" value="ENSMUSP00000109302.3"/>
    <property type="gene ID" value="ENSMUSG00000006542.14"/>
</dbReference>
<dbReference type="Ensembl" id="ENSMUST00000160732.8">
    <molecule id="Q8BGM7-1"/>
    <property type="protein sequence ID" value="ENSMUSP00000125344.2"/>
    <property type="gene ID" value="ENSMUSG00000006542.14"/>
</dbReference>
<dbReference type="Ensembl" id="ENSMUST00000188073.7">
    <molecule id="Q8BGM7-1"/>
    <property type="protein sequence ID" value="ENSMUSP00000139909.2"/>
    <property type="gene ID" value="ENSMUSG00000006542.14"/>
</dbReference>
<dbReference type="GeneID" id="241113"/>
<dbReference type="KEGG" id="mmu:241113"/>
<dbReference type="UCSC" id="uc007bnb.2">
    <molecule id="Q8BGM7-1"/>
    <property type="organism name" value="mouse"/>
</dbReference>
<dbReference type="AGR" id="MGI:1891343"/>
<dbReference type="CTD" id="53632"/>
<dbReference type="MGI" id="MGI:1891343">
    <property type="gene designation" value="Prkag3"/>
</dbReference>
<dbReference type="VEuPathDB" id="HostDB:ENSMUSG00000006542"/>
<dbReference type="eggNOG" id="KOG1764">
    <property type="taxonomic scope" value="Eukaryota"/>
</dbReference>
<dbReference type="GeneTree" id="ENSGT00950000183019"/>
<dbReference type="HOGENOM" id="CLU_021740_6_0_1"/>
<dbReference type="InParanoid" id="Q8BGM7"/>
<dbReference type="OMA" id="DFIMVLM"/>
<dbReference type="OrthoDB" id="449052at2759"/>
<dbReference type="PhylomeDB" id="Q8BGM7"/>
<dbReference type="TreeFam" id="TF313247"/>
<dbReference type="Reactome" id="R-MMU-1632852">
    <property type="pathway name" value="Macroautophagy"/>
</dbReference>
<dbReference type="Reactome" id="R-MMU-380972">
    <property type="pathway name" value="Energy dependent regulation of mTOR by LKB1-AMPK"/>
</dbReference>
<dbReference type="Reactome" id="R-MMU-5628897">
    <property type="pathway name" value="TP53 Regulates Metabolic Genes"/>
</dbReference>
<dbReference type="Reactome" id="R-MMU-6804756">
    <property type="pathway name" value="Regulation of TP53 Activity through Phosphorylation"/>
</dbReference>
<dbReference type="BioGRID-ORCS" id="241113">
    <property type="hits" value="1 hit in 75 CRISPR screens"/>
</dbReference>
<dbReference type="PRO" id="PR:Q8BGM7"/>
<dbReference type="Proteomes" id="UP000000589">
    <property type="component" value="Chromosome 1"/>
</dbReference>
<dbReference type="RNAct" id="Q8BGM7">
    <property type="molecule type" value="protein"/>
</dbReference>
<dbReference type="Bgee" id="ENSMUSG00000006542">
    <property type="expression patterns" value="Expressed in gastrocnemius medialis and 57 other cell types or tissues"/>
</dbReference>
<dbReference type="ExpressionAtlas" id="Q8BGM7">
    <property type="expression patterns" value="baseline and differential"/>
</dbReference>
<dbReference type="GO" id="GO:0005829">
    <property type="term" value="C:cytosol"/>
    <property type="evidence" value="ECO:0000304"/>
    <property type="project" value="Reactome"/>
</dbReference>
<dbReference type="GO" id="GO:0005654">
    <property type="term" value="C:nucleoplasm"/>
    <property type="evidence" value="ECO:0000304"/>
    <property type="project" value="Reactome"/>
</dbReference>
<dbReference type="GO" id="GO:0031588">
    <property type="term" value="C:nucleotide-activated protein kinase complex"/>
    <property type="evidence" value="ECO:0000266"/>
    <property type="project" value="ComplexPortal"/>
</dbReference>
<dbReference type="GO" id="GO:0004679">
    <property type="term" value="F:AMP-activated protein kinase activity"/>
    <property type="evidence" value="ECO:0007669"/>
    <property type="project" value="Ensembl"/>
</dbReference>
<dbReference type="GO" id="GO:0005524">
    <property type="term" value="F:ATP binding"/>
    <property type="evidence" value="ECO:0007669"/>
    <property type="project" value="UniProtKB-KW"/>
</dbReference>
<dbReference type="GO" id="GO:0019901">
    <property type="term" value="F:protein kinase binding"/>
    <property type="evidence" value="ECO:0007669"/>
    <property type="project" value="Ensembl"/>
</dbReference>
<dbReference type="GO" id="GO:0019887">
    <property type="term" value="F:protein kinase regulator activity"/>
    <property type="evidence" value="ECO:0000250"/>
    <property type="project" value="UniProtKB"/>
</dbReference>
<dbReference type="GO" id="GO:0031669">
    <property type="term" value="P:cellular response to nutrient levels"/>
    <property type="evidence" value="ECO:0000266"/>
    <property type="project" value="ComplexPortal"/>
</dbReference>
<dbReference type="GO" id="GO:0006633">
    <property type="term" value="P:fatty acid biosynthetic process"/>
    <property type="evidence" value="ECO:0007669"/>
    <property type="project" value="UniProtKB-KW"/>
</dbReference>
<dbReference type="GO" id="GO:0045719">
    <property type="term" value="P:negative regulation of glycogen biosynthetic process"/>
    <property type="evidence" value="ECO:0000315"/>
    <property type="project" value="MGI"/>
</dbReference>
<dbReference type="GO" id="GO:0006110">
    <property type="term" value="P:regulation of glycolytic process"/>
    <property type="evidence" value="ECO:0000315"/>
    <property type="project" value="MGI"/>
</dbReference>
<dbReference type="GO" id="GO:0014873">
    <property type="term" value="P:response to muscle activity involved in regulation of muscle adaptation"/>
    <property type="evidence" value="ECO:0000315"/>
    <property type="project" value="MGI"/>
</dbReference>
<dbReference type="CDD" id="cd04618">
    <property type="entry name" value="CBS_euAMPK_gamma-like_repeat1"/>
    <property type="match status" value="1"/>
</dbReference>
<dbReference type="CDD" id="cd04641">
    <property type="entry name" value="CBS_euAMPK_gamma-like_repeat2"/>
    <property type="match status" value="1"/>
</dbReference>
<dbReference type="FunFam" id="3.10.580.10:FF:000003">
    <property type="entry name" value="Protein kinase AMP-activated non-catalytic subunit gamma 1"/>
    <property type="match status" value="1"/>
</dbReference>
<dbReference type="FunFam" id="3.10.580.10:FF:000004">
    <property type="entry name" value="Protein kinase AMP-activated non-catalytic subunit gamma 2"/>
    <property type="match status" value="1"/>
</dbReference>
<dbReference type="Gene3D" id="3.10.580.10">
    <property type="entry name" value="CBS-domain"/>
    <property type="match status" value="2"/>
</dbReference>
<dbReference type="InterPro" id="IPR050511">
    <property type="entry name" value="AMPK_gamma/SDS23_families"/>
</dbReference>
<dbReference type="InterPro" id="IPR000644">
    <property type="entry name" value="CBS_dom"/>
</dbReference>
<dbReference type="InterPro" id="IPR046342">
    <property type="entry name" value="CBS_dom_sf"/>
</dbReference>
<dbReference type="PANTHER" id="PTHR13780:SF31">
    <property type="entry name" value="5'-AMP-ACTIVATED PROTEIN KINASE SUBUNIT GAMMA-3"/>
    <property type="match status" value="1"/>
</dbReference>
<dbReference type="PANTHER" id="PTHR13780">
    <property type="entry name" value="AMP-ACTIVATED PROTEIN KINASE, GAMMA REGULATORY SUBUNIT"/>
    <property type="match status" value="1"/>
</dbReference>
<dbReference type="Pfam" id="PF00571">
    <property type="entry name" value="CBS"/>
    <property type="match status" value="4"/>
</dbReference>
<dbReference type="SMART" id="SM00116">
    <property type="entry name" value="CBS"/>
    <property type="match status" value="4"/>
</dbReference>
<dbReference type="SUPFAM" id="SSF54631">
    <property type="entry name" value="CBS-domain pair"/>
    <property type="match status" value="2"/>
</dbReference>
<dbReference type="PROSITE" id="PS51371">
    <property type="entry name" value="CBS"/>
    <property type="match status" value="4"/>
</dbReference>
<organism>
    <name type="scientific">Mus musculus</name>
    <name type="common">Mouse</name>
    <dbReference type="NCBI Taxonomy" id="10090"/>
    <lineage>
        <taxon>Eukaryota</taxon>
        <taxon>Metazoa</taxon>
        <taxon>Chordata</taxon>
        <taxon>Craniata</taxon>
        <taxon>Vertebrata</taxon>
        <taxon>Euteleostomi</taxon>
        <taxon>Mammalia</taxon>
        <taxon>Eutheria</taxon>
        <taxon>Euarchontoglires</taxon>
        <taxon>Glires</taxon>
        <taxon>Rodentia</taxon>
        <taxon>Myomorpha</taxon>
        <taxon>Muroidea</taxon>
        <taxon>Muridae</taxon>
        <taxon>Murinae</taxon>
        <taxon>Mus</taxon>
        <taxon>Mus</taxon>
    </lineage>
</organism>
<comment type="function">
    <text evidence="3">AMP/ATP-binding subunit of AMP-activated protein kinase (AMPK), an energy sensor protein kinase that plays a key role in regulating cellular energy metabolism. In response to reduction of intracellular ATP levels, AMPK activates energy-producing pathways and inhibits energy-consuming processes: inhibits protein, carbohydrate and lipid biosynthesis, as well as cell growth and proliferation. AMPK acts via direct phosphorylation of metabolic enzymes, and by longer-term effects via phosphorylation of transcription regulators. AMPK also acts as a regulator of cellular polarity by remodeling the actin cytoskeleton; probably by indirectly activating myosin. The AMPK gamma3 subunit is a non-catalytic subunit with a regulatory role in muscle energy metabolism. It mediates binding to AMP, ADP and ATP, leading to AMPK activation or inhibition: AMP-binding results in allosteric activation of alpha catalytic subunit (PRKAA1 or PRKAA2) both by inducing phosphorylation and preventing dephosphorylation of catalytic subunits. ADP also stimulates phosphorylation, without stimulating already phosphorylated catalytic subunit. ATP promotes dephosphorylation of catalytic subunit, rendering the AMPK enzyme inactive.</text>
</comment>
<comment type="subunit">
    <text evidence="1">AMPK is a heterotrimer of an alpha catalytic subunit (PRKAA1 or PRKAA2), a beta (PRKAB1 or PRKAB2) and a gamma non-catalytic subunits (PRKAG1, PRKAG2 or PRKAG3). Interacts with FNIP1 and FNIP2 (By similarity).</text>
</comment>
<comment type="alternative products">
    <event type="alternative splicing"/>
    <isoform>
        <id>Q8BGM7-1</id>
        <name>1</name>
        <name>Long</name>
        <sequence type="displayed"/>
    </isoform>
    <isoform>
        <id>Q8BGM7-2</id>
        <name>2</name>
        <name>Short</name>
        <sequence type="described" ref="VSP_015588"/>
    </isoform>
</comment>
<comment type="domain">
    <text evidence="1">The AMPK pseudosubstrate motif resembles the sequence around sites phosphorylated on target proteins of AMPK, except the presence of a non-phosphorylatable residue in place of Ser. In the absence of AMP this pseudosubstrate sequence may bind to the active site groove on the alpha subunit (PRKAA1 or PRKAA2), preventing phosphorylation by the upstream activating kinase STK11/LKB1 (By similarity).</text>
</comment>
<comment type="domain">
    <text evidence="2">The 4 CBS domains mediate binding to nucleotides. Of the 4 potential nucleotide-binding sites, 3 are occupied, designated as sites 1, 3, and 4 based on the CBS modules that provide the acidic residue for coordination with the 2'- and 3'-hydroxyl groups of the ribose of AMP. Of these, site 4 appears to be a structural site that retains a tightly held AMP molecule (AMP 3). The 2 remaining sites, 1 and 3, can bind either AMP, ADP or ATP. Site 1 (AMP, ADP or ATP 1) is the high-affinity binding site and likely accommodates AMP or ADP. Site 3 (AMP, ADP or ATP 2) is the weakest nucleotide-binding site on the gamma subunit, yet it is exquisitely sensitive to changes in nucleotide levels and this allows AMPK to respond rapidly to changes in cellular energy status. Site 3 is likely to be responsible for protection of a conserved threonine in the activation loop of the alpha catalytic subunit through conformational changes induced by binding of AMP or ADP.</text>
</comment>
<comment type="PTM">
    <text evidence="6">Phosphorylated by ULK1; leading to negatively regulate AMPK activity and suggesting the existence of a regulatory feedback loop between ULK1 and AMPK.</text>
</comment>
<comment type="PTM">
    <text evidence="3">Glycosylated; O-GlcNAcylated by OGT, promoting the AMP-activated protein kinase (AMPK) activity.</text>
</comment>
<comment type="similarity">
    <text evidence="9">Belongs to the 5'-AMP-activated protein kinase gamma subunit family.</text>
</comment>
<feature type="chain" id="PRO_0000204385" description="5'-AMP-activated protein kinase subunit gamma-3">
    <location>
        <begin position="1"/>
        <end position="489"/>
    </location>
</feature>
<feature type="domain" description="CBS 1" evidence="4">
    <location>
        <begin position="197"/>
        <end position="258"/>
    </location>
</feature>
<feature type="domain" description="CBS 2" evidence="4">
    <location>
        <begin position="280"/>
        <end position="340"/>
    </location>
</feature>
<feature type="domain" description="CBS 3" evidence="4">
    <location>
        <begin position="355"/>
        <end position="415"/>
    </location>
</feature>
<feature type="domain" description="CBS 4" evidence="4">
    <location>
        <begin position="427"/>
        <end position="486"/>
    </location>
</feature>
<feature type="region of interest" description="Disordered" evidence="5">
    <location>
        <begin position="1"/>
        <end position="95"/>
    </location>
</feature>
<feature type="short sequence motif" description="AMPK pseudosubstrate">
    <location>
        <begin position="293"/>
        <end position="314"/>
    </location>
</feature>
<feature type="compositionally biased region" description="Polar residues" evidence="5">
    <location>
        <begin position="32"/>
        <end position="47"/>
    </location>
</feature>
<feature type="binding site" evidence="2">
    <location>
        <position position="225"/>
    </location>
    <ligand>
        <name>ADP</name>
        <dbReference type="ChEBI" id="CHEBI:456216"/>
        <label>2</label>
    </ligand>
</feature>
<feature type="binding site" evidence="2">
    <location>
        <position position="225"/>
    </location>
    <ligand>
        <name>AMP</name>
        <dbReference type="ChEBI" id="CHEBI:456215"/>
        <label>2</label>
    </ligand>
</feature>
<feature type="binding site" evidence="2">
    <location>
        <position position="225"/>
    </location>
    <ligand>
        <name>ATP</name>
        <dbReference type="ChEBI" id="CHEBI:30616"/>
        <label>1</label>
    </ligand>
</feature>
<feature type="binding site" evidence="2">
    <location>
        <position position="225"/>
    </location>
    <ligand>
        <name>ATP</name>
        <dbReference type="ChEBI" id="CHEBI:30616"/>
        <label>2</label>
    </ligand>
</feature>
<feature type="binding site" evidence="2">
    <location>
        <begin position="240"/>
        <end position="245"/>
    </location>
    <ligand>
        <name>ADP</name>
        <dbReference type="ChEBI" id="CHEBI:456216"/>
        <label>1</label>
    </ligand>
</feature>
<feature type="binding site" evidence="2">
    <location>
        <begin position="240"/>
        <end position="245"/>
    </location>
    <ligand>
        <name>AMP</name>
        <dbReference type="ChEBI" id="CHEBI:456215"/>
        <label>1</label>
    </ligand>
</feature>
<feature type="binding site" evidence="2">
    <location>
        <begin position="240"/>
        <end position="245"/>
    </location>
    <ligand>
        <name>ATP</name>
        <dbReference type="ChEBI" id="CHEBI:30616"/>
        <label>1</label>
    </ligand>
</feature>
<feature type="binding site" evidence="2">
    <location>
        <position position="285"/>
    </location>
    <ligand>
        <name>ADP</name>
        <dbReference type="ChEBI" id="CHEBI:456216"/>
        <label>1</label>
    </ligand>
</feature>
<feature type="binding site" evidence="2">
    <location>
        <position position="285"/>
    </location>
    <ligand>
        <name>AMP</name>
        <dbReference type="ChEBI" id="CHEBI:456215"/>
        <label>1</label>
    </ligand>
</feature>
<feature type="binding site" evidence="2">
    <location>
        <position position="285"/>
    </location>
    <ligand>
        <name>ATP</name>
        <dbReference type="ChEBI" id="CHEBI:30616"/>
        <label>1</label>
    </ligand>
</feature>
<feature type="binding site" evidence="2">
    <location>
        <begin position="306"/>
        <end position="307"/>
    </location>
    <ligand>
        <name>ADP</name>
        <dbReference type="ChEBI" id="CHEBI:456216"/>
        <label>1</label>
    </ligand>
</feature>
<feature type="binding site" evidence="2">
    <location>
        <begin position="306"/>
        <end position="307"/>
    </location>
    <ligand>
        <name>AMP</name>
        <dbReference type="ChEBI" id="CHEBI:456215"/>
        <label>1</label>
    </ligand>
</feature>
<feature type="binding site" evidence="2">
    <location>
        <begin position="306"/>
        <end position="307"/>
    </location>
    <ligand>
        <name>ATP</name>
        <dbReference type="ChEBI" id="CHEBI:30616"/>
        <label>1</label>
    </ligand>
</feature>
<feature type="binding site" evidence="2">
    <location>
        <position position="306"/>
    </location>
    <ligand>
        <name>AMP</name>
        <dbReference type="ChEBI" id="CHEBI:456215"/>
        <label>3</label>
    </ligand>
</feature>
<feature type="binding site" evidence="2">
    <location>
        <position position="307"/>
    </location>
    <ligand>
        <name>ATP</name>
        <dbReference type="ChEBI" id="CHEBI:30616"/>
        <label>2</label>
    </ligand>
</feature>
<feature type="binding site" evidence="2">
    <location>
        <position position="325"/>
    </location>
    <ligand>
        <name>ADP</name>
        <dbReference type="ChEBI" id="CHEBI:456216"/>
        <label>2</label>
    </ligand>
</feature>
<feature type="binding site" evidence="2">
    <location>
        <position position="325"/>
    </location>
    <ligand>
        <name>AMP</name>
        <dbReference type="ChEBI" id="CHEBI:456215"/>
        <label>2</label>
    </ligand>
</feature>
<feature type="binding site" evidence="2">
    <location>
        <position position="325"/>
    </location>
    <ligand>
        <name>ATP</name>
        <dbReference type="ChEBI" id="CHEBI:30616"/>
        <label>2</label>
    </ligand>
</feature>
<feature type="binding site" evidence="2">
    <location>
        <position position="355"/>
    </location>
    <ligand>
        <name>AMP</name>
        <dbReference type="ChEBI" id="CHEBI:456215"/>
        <label>3</label>
    </ligand>
</feature>
<feature type="binding site" evidence="2">
    <location>
        <position position="360"/>
    </location>
    <ligand>
        <name>AMP</name>
        <dbReference type="ChEBI" id="CHEBI:456215"/>
        <label>3</label>
    </ligand>
</feature>
<feature type="binding site" evidence="2">
    <location>
        <begin position="381"/>
        <end position="382"/>
    </location>
    <ligand>
        <name>AMP</name>
        <dbReference type="ChEBI" id="CHEBI:456215"/>
        <label>3</label>
    </ligand>
</feature>
<feature type="binding site" evidence="2">
    <location>
        <begin position="397"/>
        <end position="400"/>
    </location>
    <ligand>
        <name>ADP</name>
        <dbReference type="ChEBI" id="CHEBI:456216"/>
        <label>2</label>
    </ligand>
</feature>
<feature type="binding site" evidence="2">
    <location>
        <begin position="397"/>
        <end position="400"/>
    </location>
    <ligand>
        <name>AMP</name>
        <dbReference type="ChEBI" id="CHEBI:456215"/>
        <label>2</label>
    </ligand>
</feature>
<feature type="binding site" evidence="2">
    <location>
        <begin position="397"/>
        <end position="400"/>
    </location>
    <ligand>
        <name>ATP</name>
        <dbReference type="ChEBI" id="CHEBI:30616"/>
        <label>2</label>
    </ligand>
</feature>
<feature type="binding site" evidence="2">
    <location>
        <position position="424"/>
    </location>
    <ligand>
        <name>ADP</name>
        <dbReference type="ChEBI" id="CHEBI:456216"/>
        <label>2</label>
    </ligand>
</feature>
<feature type="binding site" evidence="2">
    <location>
        <position position="424"/>
    </location>
    <ligand>
        <name>AMP</name>
        <dbReference type="ChEBI" id="CHEBI:456215"/>
        <label>2</label>
    </ligand>
</feature>
<feature type="binding site" evidence="2">
    <location>
        <position position="424"/>
    </location>
    <ligand>
        <name>ATP</name>
        <dbReference type="ChEBI" id="CHEBI:30616"/>
        <label>2</label>
    </ligand>
</feature>
<feature type="binding site" evidence="2">
    <location>
        <position position="432"/>
    </location>
    <ligand>
        <name>ADP</name>
        <dbReference type="ChEBI" id="CHEBI:456216"/>
        <label>2</label>
    </ligand>
</feature>
<feature type="binding site" evidence="2">
    <location>
        <position position="432"/>
    </location>
    <ligand>
        <name>AMP</name>
        <dbReference type="ChEBI" id="CHEBI:456215"/>
        <label>2</label>
    </ligand>
</feature>
<feature type="binding site" evidence="2">
    <location>
        <position position="432"/>
    </location>
    <ligand>
        <name>ATP</name>
        <dbReference type="ChEBI" id="CHEBI:30616"/>
        <label>2</label>
    </ligand>
</feature>
<feature type="binding site" evidence="2">
    <location>
        <begin position="453"/>
        <end position="454"/>
    </location>
    <ligand>
        <name>ADP</name>
        <dbReference type="ChEBI" id="CHEBI:456216"/>
        <label>2</label>
    </ligand>
</feature>
<feature type="binding site" evidence="2">
    <location>
        <begin position="453"/>
        <end position="454"/>
    </location>
    <ligand>
        <name>AMP</name>
        <dbReference type="ChEBI" id="CHEBI:456215"/>
        <label>2</label>
    </ligand>
</feature>
<feature type="binding site" evidence="2">
    <location>
        <begin position="453"/>
        <end position="454"/>
    </location>
    <ligand>
        <name>ATP</name>
        <dbReference type="ChEBI" id="CHEBI:30616"/>
        <label>2</label>
    </ligand>
</feature>
<feature type="binding site" evidence="2">
    <location>
        <position position="453"/>
    </location>
    <ligand>
        <name>AMP</name>
        <dbReference type="ChEBI" id="CHEBI:456215"/>
        <label>3</label>
    </ligand>
</feature>
<feature type="binding site" evidence="2">
    <location>
        <begin position="469"/>
        <end position="472"/>
    </location>
    <ligand>
        <name>AMP</name>
        <dbReference type="ChEBI" id="CHEBI:456215"/>
        <label>3</label>
    </ligand>
</feature>
<feature type="splice variant" id="VSP_015588" description="In isoform 2." evidence="7 8">
    <location>
        <begin position="1"/>
        <end position="25"/>
    </location>
</feature>
<feature type="sequence conflict" description="In Ref. 2; AAP22981." evidence="9" ref="2">
    <original>G</original>
    <variation>GS</variation>
    <location>
        <position position="390"/>
    </location>
</feature>
<name>AAKG3_MOUSE</name>
<sequence>MEPELEHTLPGTLTWSHSGGPESQEMDFLEQGENSWPSPAVATSSERTCAIRGVKASRWTRQEAVEEAEPPGLGEGAQSRPAAESTRQEATFPKATPLAQAVPLAEAETSPTGWDLLLPDCAASAGGSSTGDLELTIEFPAPEAWDCELEGLGKDRPRPGPSPQAPLLGLSWDDELQKPGAQVYMHFMQEHTCYDAMATSSKLVIFDTTLEIKKAFFAMVANGVRAAPLWDSKKQSFVGMLTITDFILVLHRYYRSPLVQIYEIEEHKIETWREIYLQGCFKPLVSISPNDSLFEAVYALIKNRIHRLPVLDPVSGTVLYILTHKRLLKFLHIFGALLPRPSFLCRTIQDLGIGTFRDLAVVLETAPVLTALDIFVDRRVSALPVVNESGQVVGLYSRFDVIHLAAQQTYNHLDMSVGEALRQRTLCLEGVLSCQPHESLGEVIDRIAREQVHRLVLVDETQHLLGVVSLSDILQALVLSPAGIDALSA</sequence>
<protein>
    <recommendedName>
        <fullName>5'-AMP-activated protein kinase subunit gamma-3</fullName>
        <shortName>AMPK gamma3</shortName>
        <shortName>AMPK subunit gamma-3</shortName>
    </recommendedName>
</protein>
<gene>
    <name type="primary">Prkag3</name>
</gene>
<accession>Q8BGM7</accession>
<accession>Q0VG42</accession>
<accession>Q80WK8</accession>
<accession>Q8CJ41</accession>
<proteinExistence type="evidence at protein level"/>